<accession>Q3IYU4</accession>
<dbReference type="EC" id="1.17.1.8" evidence="1"/>
<dbReference type="EMBL" id="CP000143">
    <property type="protein sequence ID" value="ABA80290.1"/>
    <property type="molecule type" value="Genomic_DNA"/>
</dbReference>
<dbReference type="RefSeq" id="WP_011338720.1">
    <property type="nucleotide sequence ID" value="NC_007493.2"/>
</dbReference>
<dbReference type="RefSeq" id="YP_354191.1">
    <property type="nucleotide sequence ID" value="NC_007493.2"/>
</dbReference>
<dbReference type="SMR" id="Q3IYU4"/>
<dbReference type="STRING" id="272943.RSP_1105"/>
<dbReference type="EnsemblBacteria" id="ABA80290">
    <property type="protein sequence ID" value="ABA80290"/>
    <property type="gene ID" value="RSP_1105"/>
</dbReference>
<dbReference type="GeneID" id="3720689"/>
<dbReference type="KEGG" id="rsp:RSP_1105"/>
<dbReference type="PATRIC" id="fig|272943.9.peg.3083"/>
<dbReference type="eggNOG" id="COG0289">
    <property type="taxonomic scope" value="Bacteria"/>
</dbReference>
<dbReference type="OrthoDB" id="9790352at2"/>
<dbReference type="PhylomeDB" id="Q3IYU4"/>
<dbReference type="UniPathway" id="UPA00034">
    <property type="reaction ID" value="UER00018"/>
</dbReference>
<dbReference type="Proteomes" id="UP000002703">
    <property type="component" value="Chromosome 1"/>
</dbReference>
<dbReference type="GO" id="GO:0005829">
    <property type="term" value="C:cytosol"/>
    <property type="evidence" value="ECO:0007669"/>
    <property type="project" value="TreeGrafter"/>
</dbReference>
<dbReference type="GO" id="GO:0008839">
    <property type="term" value="F:4-hydroxy-tetrahydrodipicolinate reductase"/>
    <property type="evidence" value="ECO:0007669"/>
    <property type="project" value="UniProtKB-EC"/>
</dbReference>
<dbReference type="GO" id="GO:0051287">
    <property type="term" value="F:NAD binding"/>
    <property type="evidence" value="ECO:0007669"/>
    <property type="project" value="UniProtKB-UniRule"/>
</dbReference>
<dbReference type="GO" id="GO:0050661">
    <property type="term" value="F:NADP binding"/>
    <property type="evidence" value="ECO:0007669"/>
    <property type="project" value="UniProtKB-UniRule"/>
</dbReference>
<dbReference type="GO" id="GO:0016726">
    <property type="term" value="F:oxidoreductase activity, acting on CH or CH2 groups, NAD or NADP as acceptor"/>
    <property type="evidence" value="ECO:0007669"/>
    <property type="project" value="UniProtKB-UniRule"/>
</dbReference>
<dbReference type="GO" id="GO:0019877">
    <property type="term" value="P:diaminopimelate biosynthetic process"/>
    <property type="evidence" value="ECO:0007669"/>
    <property type="project" value="UniProtKB-UniRule"/>
</dbReference>
<dbReference type="GO" id="GO:0009089">
    <property type="term" value="P:lysine biosynthetic process via diaminopimelate"/>
    <property type="evidence" value="ECO:0007669"/>
    <property type="project" value="UniProtKB-UniRule"/>
</dbReference>
<dbReference type="CDD" id="cd02274">
    <property type="entry name" value="DHDPR_N"/>
    <property type="match status" value="1"/>
</dbReference>
<dbReference type="FunFam" id="3.30.360.10:FF:000004">
    <property type="entry name" value="4-hydroxy-tetrahydrodipicolinate reductase"/>
    <property type="match status" value="1"/>
</dbReference>
<dbReference type="Gene3D" id="3.30.360.10">
    <property type="entry name" value="Dihydrodipicolinate Reductase, domain 2"/>
    <property type="match status" value="1"/>
</dbReference>
<dbReference type="Gene3D" id="3.40.50.720">
    <property type="entry name" value="NAD(P)-binding Rossmann-like Domain"/>
    <property type="match status" value="1"/>
</dbReference>
<dbReference type="HAMAP" id="MF_00102">
    <property type="entry name" value="DapB"/>
    <property type="match status" value="1"/>
</dbReference>
<dbReference type="InterPro" id="IPR022663">
    <property type="entry name" value="DapB_C"/>
</dbReference>
<dbReference type="InterPro" id="IPR000846">
    <property type="entry name" value="DapB_N"/>
</dbReference>
<dbReference type="InterPro" id="IPR022664">
    <property type="entry name" value="DapB_N_CS"/>
</dbReference>
<dbReference type="InterPro" id="IPR023940">
    <property type="entry name" value="DHDPR_bac"/>
</dbReference>
<dbReference type="InterPro" id="IPR036291">
    <property type="entry name" value="NAD(P)-bd_dom_sf"/>
</dbReference>
<dbReference type="NCBIfam" id="TIGR00036">
    <property type="entry name" value="dapB"/>
    <property type="match status" value="1"/>
</dbReference>
<dbReference type="PANTHER" id="PTHR20836:SF0">
    <property type="entry name" value="4-HYDROXY-TETRAHYDRODIPICOLINATE REDUCTASE 1, CHLOROPLASTIC-RELATED"/>
    <property type="match status" value="1"/>
</dbReference>
<dbReference type="PANTHER" id="PTHR20836">
    <property type="entry name" value="DIHYDRODIPICOLINATE REDUCTASE"/>
    <property type="match status" value="1"/>
</dbReference>
<dbReference type="Pfam" id="PF05173">
    <property type="entry name" value="DapB_C"/>
    <property type="match status" value="1"/>
</dbReference>
<dbReference type="Pfam" id="PF01113">
    <property type="entry name" value="DapB_N"/>
    <property type="match status" value="1"/>
</dbReference>
<dbReference type="PIRSF" id="PIRSF000161">
    <property type="entry name" value="DHPR"/>
    <property type="match status" value="1"/>
</dbReference>
<dbReference type="SUPFAM" id="SSF55347">
    <property type="entry name" value="Glyceraldehyde-3-phosphate dehydrogenase-like, C-terminal domain"/>
    <property type="match status" value="1"/>
</dbReference>
<dbReference type="SUPFAM" id="SSF51735">
    <property type="entry name" value="NAD(P)-binding Rossmann-fold domains"/>
    <property type="match status" value="1"/>
</dbReference>
<dbReference type="PROSITE" id="PS01298">
    <property type="entry name" value="DAPB"/>
    <property type="match status" value="1"/>
</dbReference>
<protein>
    <recommendedName>
        <fullName evidence="1">4-hydroxy-tetrahydrodipicolinate reductase</fullName>
        <shortName evidence="1">HTPA reductase</shortName>
        <ecNumber evidence="1">1.17.1.8</ecNumber>
    </recommendedName>
</protein>
<comment type="function">
    <text evidence="1">Catalyzes the conversion of 4-hydroxy-tetrahydrodipicolinate (HTPA) to tetrahydrodipicolinate.</text>
</comment>
<comment type="catalytic activity">
    <reaction evidence="1">
        <text>(S)-2,3,4,5-tetrahydrodipicolinate + NAD(+) + H2O = (2S,4S)-4-hydroxy-2,3,4,5-tetrahydrodipicolinate + NADH + H(+)</text>
        <dbReference type="Rhea" id="RHEA:35323"/>
        <dbReference type="ChEBI" id="CHEBI:15377"/>
        <dbReference type="ChEBI" id="CHEBI:15378"/>
        <dbReference type="ChEBI" id="CHEBI:16845"/>
        <dbReference type="ChEBI" id="CHEBI:57540"/>
        <dbReference type="ChEBI" id="CHEBI:57945"/>
        <dbReference type="ChEBI" id="CHEBI:67139"/>
        <dbReference type="EC" id="1.17.1.8"/>
    </reaction>
</comment>
<comment type="catalytic activity">
    <reaction evidence="1">
        <text>(S)-2,3,4,5-tetrahydrodipicolinate + NADP(+) + H2O = (2S,4S)-4-hydroxy-2,3,4,5-tetrahydrodipicolinate + NADPH + H(+)</text>
        <dbReference type="Rhea" id="RHEA:35331"/>
        <dbReference type="ChEBI" id="CHEBI:15377"/>
        <dbReference type="ChEBI" id="CHEBI:15378"/>
        <dbReference type="ChEBI" id="CHEBI:16845"/>
        <dbReference type="ChEBI" id="CHEBI:57783"/>
        <dbReference type="ChEBI" id="CHEBI:58349"/>
        <dbReference type="ChEBI" id="CHEBI:67139"/>
        <dbReference type="EC" id="1.17.1.8"/>
    </reaction>
</comment>
<comment type="pathway">
    <text evidence="1">Amino-acid biosynthesis; L-lysine biosynthesis via DAP pathway; (S)-tetrahydrodipicolinate from L-aspartate: step 4/4.</text>
</comment>
<comment type="subcellular location">
    <subcellularLocation>
        <location evidence="1">Cytoplasm</location>
    </subcellularLocation>
</comment>
<comment type="similarity">
    <text evidence="1">Belongs to the DapB family.</text>
</comment>
<comment type="caution">
    <text evidence="2">Was originally thought to be a dihydrodipicolinate reductase (DHDPR), catalyzing the conversion of dihydrodipicolinate to tetrahydrodipicolinate. However, it was shown in E.coli that the substrate of the enzymatic reaction is not dihydrodipicolinate (DHDP) but in fact (2S,4S)-4-hydroxy-2,3,4,5-tetrahydrodipicolinic acid (HTPA), the product released by the DapA-catalyzed reaction.</text>
</comment>
<reference key="1">
    <citation type="submission" date="2005-09" db="EMBL/GenBank/DDBJ databases">
        <title>Complete sequence of chromosome 1 of Rhodobacter sphaeroides 2.4.1.</title>
        <authorList>
            <person name="Copeland A."/>
            <person name="Lucas S."/>
            <person name="Lapidus A."/>
            <person name="Barry K."/>
            <person name="Detter J.C."/>
            <person name="Glavina T."/>
            <person name="Hammon N."/>
            <person name="Israni S."/>
            <person name="Pitluck S."/>
            <person name="Richardson P."/>
            <person name="Mackenzie C."/>
            <person name="Choudhary M."/>
            <person name="Larimer F."/>
            <person name="Hauser L.J."/>
            <person name="Land M."/>
            <person name="Donohue T.J."/>
            <person name="Kaplan S."/>
        </authorList>
    </citation>
    <scope>NUCLEOTIDE SEQUENCE [LARGE SCALE GENOMIC DNA]</scope>
    <source>
        <strain>ATCC 17023 / DSM 158 / JCM 6121 / CCUG 31486 / LMG 2827 / NBRC 12203 / NCIMB 8253 / ATH 2.4.1.</strain>
    </source>
</reference>
<name>DAPB_CERS4</name>
<gene>
    <name evidence="1" type="primary">dapB</name>
    <name type="ordered locus">RHOS4_27220</name>
    <name type="ORF">RSP_1105</name>
</gene>
<feature type="chain" id="PRO_0000228380" description="4-hydroxy-tetrahydrodipicolinate reductase">
    <location>
        <begin position="1"/>
        <end position="269"/>
    </location>
</feature>
<feature type="active site" description="Proton donor/acceptor" evidence="1">
    <location>
        <position position="158"/>
    </location>
</feature>
<feature type="active site" description="Proton donor" evidence="1">
    <location>
        <position position="162"/>
    </location>
</feature>
<feature type="binding site" evidence="1">
    <location>
        <begin position="11"/>
        <end position="16"/>
    </location>
    <ligand>
        <name>NAD(+)</name>
        <dbReference type="ChEBI" id="CHEBI:57540"/>
    </ligand>
</feature>
<feature type="binding site" evidence="1">
    <location>
        <position position="37"/>
    </location>
    <ligand>
        <name>NAD(+)</name>
        <dbReference type="ChEBI" id="CHEBI:57540"/>
    </ligand>
</feature>
<feature type="binding site" evidence="1">
    <location>
        <position position="38"/>
    </location>
    <ligand>
        <name>NADP(+)</name>
        <dbReference type="ChEBI" id="CHEBI:58349"/>
    </ligand>
</feature>
<feature type="binding site" evidence="1">
    <location>
        <begin position="101"/>
        <end position="103"/>
    </location>
    <ligand>
        <name>NAD(+)</name>
        <dbReference type="ChEBI" id="CHEBI:57540"/>
    </ligand>
</feature>
<feature type="binding site" evidence="1">
    <location>
        <begin position="125"/>
        <end position="128"/>
    </location>
    <ligand>
        <name>NAD(+)</name>
        <dbReference type="ChEBI" id="CHEBI:57540"/>
    </ligand>
</feature>
<feature type="binding site" evidence="1">
    <location>
        <position position="159"/>
    </location>
    <ligand>
        <name>(S)-2,3,4,5-tetrahydrodipicolinate</name>
        <dbReference type="ChEBI" id="CHEBI:16845"/>
    </ligand>
</feature>
<feature type="binding site" evidence="1">
    <location>
        <begin position="168"/>
        <end position="169"/>
    </location>
    <ligand>
        <name>(S)-2,3,4,5-tetrahydrodipicolinate</name>
        <dbReference type="ChEBI" id="CHEBI:16845"/>
    </ligand>
</feature>
<keyword id="KW-0028">Amino-acid biosynthesis</keyword>
<keyword id="KW-0963">Cytoplasm</keyword>
<keyword id="KW-0220">Diaminopimelate biosynthesis</keyword>
<keyword id="KW-0457">Lysine biosynthesis</keyword>
<keyword id="KW-0520">NAD</keyword>
<keyword id="KW-0521">NADP</keyword>
<keyword id="KW-0560">Oxidoreductase</keyword>
<keyword id="KW-1185">Reference proteome</keyword>
<proteinExistence type="inferred from homology"/>
<organism>
    <name type="scientific">Cereibacter sphaeroides (strain ATCC 17023 / DSM 158 / JCM 6121 / CCUG 31486 / LMG 2827 / NBRC 12203 / NCIMB 8253 / ATH 2.4.1.)</name>
    <name type="common">Rhodobacter sphaeroides</name>
    <dbReference type="NCBI Taxonomy" id="272943"/>
    <lineage>
        <taxon>Bacteria</taxon>
        <taxon>Pseudomonadati</taxon>
        <taxon>Pseudomonadota</taxon>
        <taxon>Alphaproteobacteria</taxon>
        <taxon>Rhodobacterales</taxon>
        <taxon>Paracoccaceae</taxon>
        <taxon>Cereibacter</taxon>
    </lineage>
</organism>
<evidence type="ECO:0000255" key="1">
    <source>
        <dbReference type="HAMAP-Rule" id="MF_00102"/>
    </source>
</evidence>
<evidence type="ECO:0000305" key="2"/>
<sequence>MSDLPGIVVTGASGRMGQMLMKTVLASGKARLVGAVERPGSDWVGRDAGAAMGGAAVGVTVTDDPLAAFAQAQAVIDFTAPEATVQFAELAAQARAVHVIGTTGLEPAHLERLAWAAHHAVIVRAGNMSLGVNLLTRLTQKVAEALDEDWDIEVVEAHHRMKVDAPSGTALMLGEAAARGRGVDLAQARVSGRDGITGPRAPGSIGFSAIRGGDIVGEHDVIFAAAGERITLRHVATDRAIFARGALKAALWGQDRRPGQYDMMDVLGL</sequence>